<gene>
    <name evidence="1" type="primary">rplY</name>
    <name evidence="1" type="synonym">ctc</name>
    <name type="ordered locus">Cag_1156</name>
</gene>
<reference key="1">
    <citation type="submission" date="2005-08" db="EMBL/GenBank/DDBJ databases">
        <title>Complete sequence of Chlorobium chlorochromatii CaD3.</title>
        <authorList>
            <consortium name="US DOE Joint Genome Institute"/>
            <person name="Copeland A."/>
            <person name="Lucas S."/>
            <person name="Lapidus A."/>
            <person name="Barry K."/>
            <person name="Detter J.C."/>
            <person name="Glavina T."/>
            <person name="Hammon N."/>
            <person name="Israni S."/>
            <person name="Pitluck S."/>
            <person name="Bryant D."/>
            <person name="Schmutz J."/>
            <person name="Larimer F."/>
            <person name="Land M."/>
            <person name="Kyrpides N."/>
            <person name="Ivanova N."/>
            <person name="Richardson P."/>
        </authorList>
    </citation>
    <scope>NUCLEOTIDE SEQUENCE [LARGE SCALE GENOMIC DNA]</scope>
    <source>
        <strain>CaD3</strain>
    </source>
</reference>
<accession>Q3ARF7</accession>
<feature type="chain" id="PRO_0000244202" description="Large ribosomal subunit protein bL25">
    <location>
        <begin position="1"/>
        <end position="195"/>
    </location>
</feature>
<sequence length="195" mass="21429">METIVLGVEPRVIKKNEAEKLRKSGLVPAVVYHKGEETVAVSIQELALTKLVHSAESHIIDLQFPDGKLKRSFIKEVQFHPVTDRIIHADFQLFSADEIVEMVVPVSVSGESVGVEKGGKLQIIMHSLTLKGKPTDMPEHFVIDITALDLAHSIHVREIPMTNYPGLTIMDEPDAPVITVLATRKEVEAAAEVAS</sequence>
<keyword id="KW-0687">Ribonucleoprotein</keyword>
<keyword id="KW-0689">Ribosomal protein</keyword>
<keyword id="KW-0694">RNA-binding</keyword>
<keyword id="KW-0699">rRNA-binding</keyword>
<proteinExistence type="inferred from homology"/>
<dbReference type="EMBL" id="CP000108">
    <property type="protein sequence ID" value="ABB28418.1"/>
    <property type="molecule type" value="Genomic_DNA"/>
</dbReference>
<dbReference type="SMR" id="Q3ARF7"/>
<dbReference type="STRING" id="340177.Cag_1156"/>
<dbReference type="KEGG" id="cch:Cag_1156"/>
<dbReference type="eggNOG" id="COG1825">
    <property type="taxonomic scope" value="Bacteria"/>
</dbReference>
<dbReference type="HOGENOM" id="CLU_075939_2_1_10"/>
<dbReference type="OrthoDB" id="9786489at2"/>
<dbReference type="GO" id="GO:0022625">
    <property type="term" value="C:cytosolic large ribosomal subunit"/>
    <property type="evidence" value="ECO:0007669"/>
    <property type="project" value="TreeGrafter"/>
</dbReference>
<dbReference type="GO" id="GO:0008097">
    <property type="term" value="F:5S rRNA binding"/>
    <property type="evidence" value="ECO:0007669"/>
    <property type="project" value="InterPro"/>
</dbReference>
<dbReference type="GO" id="GO:0003735">
    <property type="term" value="F:structural constituent of ribosome"/>
    <property type="evidence" value="ECO:0007669"/>
    <property type="project" value="InterPro"/>
</dbReference>
<dbReference type="GO" id="GO:0006412">
    <property type="term" value="P:translation"/>
    <property type="evidence" value="ECO:0007669"/>
    <property type="project" value="UniProtKB-UniRule"/>
</dbReference>
<dbReference type="CDD" id="cd00495">
    <property type="entry name" value="Ribosomal_L25_TL5_CTC"/>
    <property type="match status" value="1"/>
</dbReference>
<dbReference type="Gene3D" id="2.170.120.20">
    <property type="entry name" value="Ribosomal protein L25, beta domain"/>
    <property type="match status" value="1"/>
</dbReference>
<dbReference type="Gene3D" id="2.40.240.10">
    <property type="entry name" value="Ribosomal Protein L25, Chain P"/>
    <property type="match status" value="1"/>
</dbReference>
<dbReference type="HAMAP" id="MF_01334">
    <property type="entry name" value="Ribosomal_bL25_CTC"/>
    <property type="match status" value="1"/>
</dbReference>
<dbReference type="InterPro" id="IPR020056">
    <property type="entry name" value="Rbsml_bL25/Gln-tRNA_synth_N"/>
</dbReference>
<dbReference type="InterPro" id="IPR011035">
    <property type="entry name" value="Ribosomal_bL25/Gln-tRNA_synth"/>
</dbReference>
<dbReference type="InterPro" id="IPR020057">
    <property type="entry name" value="Ribosomal_bL25_b-dom"/>
</dbReference>
<dbReference type="InterPro" id="IPR037121">
    <property type="entry name" value="Ribosomal_bL25_C"/>
</dbReference>
<dbReference type="InterPro" id="IPR001021">
    <property type="entry name" value="Ribosomal_bL25_long"/>
</dbReference>
<dbReference type="InterPro" id="IPR029751">
    <property type="entry name" value="Ribosomal_L25_dom"/>
</dbReference>
<dbReference type="InterPro" id="IPR020930">
    <property type="entry name" value="Ribosomal_uL5_bac-type"/>
</dbReference>
<dbReference type="NCBIfam" id="TIGR00731">
    <property type="entry name" value="bL25_bact_ctc"/>
    <property type="match status" value="1"/>
</dbReference>
<dbReference type="NCBIfam" id="NF004136">
    <property type="entry name" value="PRK05618.3-2"/>
    <property type="match status" value="1"/>
</dbReference>
<dbReference type="PANTHER" id="PTHR33284">
    <property type="entry name" value="RIBOSOMAL PROTEIN L25/GLN-TRNA SYNTHETASE, ANTI-CODON-BINDING DOMAIN-CONTAINING PROTEIN"/>
    <property type="match status" value="1"/>
</dbReference>
<dbReference type="PANTHER" id="PTHR33284:SF1">
    <property type="entry name" value="RIBOSOMAL PROTEIN L25_GLN-TRNA SYNTHETASE, ANTI-CODON-BINDING DOMAIN-CONTAINING PROTEIN"/>
    <property type="match status" value="1"/>
</dbReference>
<dbReference type="Pfam" id="PF01386">
    <property type="entry name" value="Ribosomal_L25p"/>
    <property type="match status" value="1"/>
</dbReference>
<dbReference type="Pfam" id="PF14693">
    <property type="entry name" value="Ribosomal_TL5_C"/>
    <property type="match status" value="1"/>
</dbReference>
<dbReference type="SUPFAM" id="SSF50715">
    <property type="entry name" value="Ribosomal protein L25-like"/>
    <property type="match status" value="1"/>
</dbReference>
<organism>
    <name type="scientific">Chlorobium chlorochromatii (strain CaD3)</name>
    <dbReference type="NCBI Taxonomy" id="340177"/>
    <lineage>
        <taxon>Bacteria</taxon>
        <taxon>Pseudomonadati</taxon>
        <taxon>Chlorobiota</taxon>
        <taxon>Chlorobiia</taxon>
        <taxon>Chlorobiales</taxon>
        <taxon>Chlorobiaceae</taxon>
        <taxon>Chlorobium/Pelodictyon group</taxon>
        <taxon>Chlorobium</taxon>
    </lineage>
</organism>
<comment type="function">
    <text evidence="1">This is one of the proteins that binds to the 5S RNA in the ribosome where it forms part of the central protuberance.</text>
</comment>
<comment type="subunit">
    <text evidence="1">Part of the 50S ribosomal subunit; part of the 5S rRNA/L5/L18/L25 subcomplex. Contacts the 5S rRNA. Binds to the 5S rRNA independently of L5 and L18.</text>
</comment>
<comment type="similarity">
    <text evidence="1">Belongs to the bacterial ribosomal protein bL25 family. CTC subfamily.</text>
</comment>
<protein>
    <recommendedName>
        <fullName evidence="1">Large ribosomal subunit protein bL25</fullName>
    </recommendedName>
    <alternativeName>
        <fullName evidence="2">50S ribosomal protein L25</fullName>
    </alternativeName>
    <alternativeName>
        <fullName evidence="1">General stress protein CTC</fullName>
    </alternativeName>
</protein>
<evidence type="ECO:0000255" key="1">
    <source>
        <dbReference type="HAMAP-Rule" id="MF_01334"/>
    </source>
</evidence>
<evidence type="ECO:0000305" key="2"/>
<name>RL25_CHLCH</name>